<evidence type="ECO:0000255" key="1">
    <source>
        <dbReference type="HAMAP-Rule" id="MF_01237"/>
    </source>
</evidence>
<evidence type="ECO:0000269" key="2">
    <source>
    </source>
</evidence>
<evidence type="ECO:0000269" key="3">
    <source>
    </source>
</evidence>
<evidence type="ECO:0000303" key="4">
    <source>
    </source>
</evidence>
<evidence type="ECO:0000303" key="5">
    <source>
    </source>
</evidence>
<evidence type="ECO:0000305" key="6"/>
<evidence type="ECO:0000305" key="7">
    <source>
    </source>
</evidence>
<evidence type="ECO:0007744" key="8">
    <source>
        <dbReference type="PDB" id="1F5Z"/>
    </source>
</evidence>
<evidence type="ECO:0007744" key="9">
    <source>
        <dbReference type="PDB" id="1F6K"/>
    </source>
</evidence>
<evidence type="ECO:0007744" key="10">
    <source>
        <dbReference type="PDB" id="1F6P"/>
    </source>
</evidence>
<evidence type="ECO:0007744" key="11">
    <source>
        <dbReference type="PDB" id="1F73"/>
    </source>
</evidence>
<evidence type="ECO:0007744" key="12">
    <source>
        <dbReference type="PDB" id="1F74"/>
    </source>
</evidence>
<evidence type="ECO:0007744" key="13">
    <source>
        <dbReference type="PDB" id="1F7B"/>
    </source>
</evidence>
<evidence type="ECO:0007829" key="14">
    <source>
        <dbReference type="PDB" id="1F6K"/>
    </source>
</evidence>
<evidence type="ECO:0007829" key="15">
    <source>
        <dbReference type="PDB" id="1F7B"/>
    </source>
</evidence>
<sequence length="293" mass="32565">MRDLKGIFSALLVSFNEDGTINEKGLRQIIRHNIDKMKVDGLYVGGSTGENFMLSTEEKKEIFRIAKDEAKDQIALIAQVGSVNLKEAVELGKYATELGYDCLSAVTPFYYKFSFPEIKHYYDTIIAETGNNMIVYSIPFLTGVNMGIEQFGELYKNPKVLGVKFTAGDFYLLERLKKAYPNHLIWAGFDEMMLPAASLGVDGAIGSTFNVNGVRARQIFELTKAGKLAEALEIQHVTNDLIEGILANGLYLTIKELLKLEGVDAGYCREPMTSKATEEQLAKAKDLKAKFLS</sequence>
<feature type="chain" id="PRO_0000103214" description="N-acetylneuraminate lyase">
    <location>
        <begin position="1"/>
        <end position="293"/>
    </location>
</feature>
<feature type="active site" description="Proton donor" evidence="1 7">
    <location>
        <position position="136"/>
    </location>
</feature>
<feature type="active site" description="Schiff-base intermediate with substrate" evidence="1 7">
    <location>
        <position position="164"/>
    </location>
</feature>
<feature type="binding site" evidence="1">
    <location>
        <position position="47"/>
    </location>
    <ligand>
        <name>aceneuramate</name>
        <dbReference type="ChEBI" id="CHEBI:173083"/>
    </ligand>
</feature>
<feature type="binding site" evidence="1">
    <location>
        <position position="48"/>
    </location>
    <ligand>
        <name>aceneuramate</name>
        <dbReference type="ChEBI" id="CHEBI:173083"/>
    </ligand>
</feature>
<feature type="binding site" evidence="1">
    <location>
        <position position="166"/>
    </location>
    <ligand>
        <name>aceneuramate</name>
        <dbReference type="ChEBI" id="CHEBI:173083"/>
    </ligand>
</feature>
<feature type="binding site" evidence="1">
    <location>
        <position position="188"/>
    </location>
    <ligand>
        <name>aceneuramate</name>
        <dbReference type="ChEBI" id="CHEBI:173083"/>
    </ligand>
</feature>
<feature type="binding site" evidence="1">
    <location>
        <position position="190"/>
    </location>
    <ligand>
        <name>aceneuramate</name>
        <dbReference type="ChEBI" id="CHEBI:173083"/>
    </ligand>
</feature>
<feature type="binding site" evidence="1">
    <location>
        <position position="191"/>
    </location>
    <ligand>
        <name>aceneuramate</name>
        <dbReference type="ChEBI" id="CHEBI:173083"/>
    </ligand>
</feature>
<feature type="binding site" evidence="1">
    <location>
        <position position="207"/>
    </location>
    <ligand>
        <name>aceneuramate</name>
        <dbReference type="ChEBI" id="CHEBI:173083"/>
    </ligand>
</feature>
<feature type="strand" evidence="14">
    <location>
        <begin position="6"/>
        <end position="10"/>
    </location>
</feature>
<feature type="strand" evidence="15">
    <location>
        <begin position="19"/>
        <end position="21"/>
    </location>
</feature>
<feature type="helix" evidence="14">
    <location>
        <begin position="23"/>
        <end position="35"/>
    </location>
</feature>
<feature type="strand" evidence="14">
    <location>
        <begin position="40"/>
        <end position="46"/>
    </location>
</feature>
<feature type="helix" evidence="14">
    <location>
        <begin position="47"/>
        <end position="49"/>
    </location>
</feature>
<feature type="helix" evidence="14">
    <location>
        <begin position="51"/>
        <end position="53"/>
    </location>
</feature>
<feature type="helix" evidence="14">
    <location>
        <begin position="56"/>
        <end position="70"/>
    </location>
</feature>
<feature type="strand" evidence="14">
    <location>
        <begin position="73"/>
        <end position="79"/>
    </location>
</feature>
<feature type="helix" evidence="14">
    <location>
        <begin position="85"/>
        <end position="98"/>
    </location>
</feature>
<feature type="strand" evidence="14">
    <location>
        <begin position="101"/>
        <end position="106"/>
    </location>
</feature>
<feature type="helix" evidence="14">
    <location>
        <begin position="115"/>
        <end position="129"/>
    </location>
</feature>
<feature type="strand" evidence="14">
    <location>
        <begin position="133"/>
        <end position="137"/>
    </location>
</feature>
<feature type="helix" evidence="14">
    <location>
        <begin position="139"/>
        <end position="142"/>
    </location>
</feature>
<feature type="helix" evidence="14">
    <location>
        <begin position="148"/>
        <end position="155"/>
    </location>
</feature>
<feature type="strand" evidence="14">
    <location>
        <begin position="160"/>
        <end position="165"/>
    </location>
</feature>
<feature type="helix" evidence="14">
    <location>
        <begin position="170"/>
        <end position="179"/>
    </location>
</feature>
<feature type="strand" evidence="14">
    <location>
        <begin position="183"/>
        <end position="187"/>
    </location>
</feature>
<feature type="helix" evidence="14">
    <location>
        <begin position="190"/>
        <end position="192"/>
    </location>
</feature>
<feature type="helix" evidence="14">
    <location>
        <begin position="193"/>
        <end position="198"/>
    </location>
</feature>
<feature type="strand" evidence="14">
    <location>
        <begin position="202"/>
        <end position="207"/>
    </location>
</feature>
<feature type="helix" evidence="14">
    <location>
        <begin position="209"/>
        <end position="224"/>
    </location>
</feature>
<feature type="helix" evidence="14">
    <location>
        <begin position="228"/>
        <end position="248"/>
    </location>
</feature>
<feature type="helix" evidence="14">
    <location>
        <begin position="250"/>
        <end position="260"/>
    </location>
</feature>
<feature type="helix" evidence="14">
    <location>
        <begin position="278"/>
        <end position="291"/>
    </location>
</feature>
<proteinExistence type="evidence at protein level"/>
<accession>P44539</accession>
<reference key="1">
    <citation type="journal article" date="1995" name="Science">
        <title>Whole-genome random sequencing and assembly of Haemophilus influenzae Rd.</title>
        <authorList>
            <person name="Fleischmann R.D."/>
            <person name="Adams M.D."/>
            <person name="White O."/>
            <person name="Clayton R.A."/>
            <person name="Kirkness E.F."/>
            <person name="Kerlavage A.R."/>
            <person name="Bult C.J."/>
            <person name="Tomb J.-F."/>
            <person name="Dougherty B.A."/>
            <person name="Merrick J.M."/>
            <person name="McKenney K."/>
            <person name="Sutton G.G."/>
            <person name="FitzHugh W."/>
            <person name="Fields C.A."/>
            <person name="Gocayne J.D."/>
            <person name="Scott J.D."/>
            <person name="Shirley R."/>
            <person name="Liu L.-I."/>
            <person name="Glodek A."/>
            <person name="Kelley J.M."/>
            <person name="Weidman J.F."/>
            <person name="Phillips C.A."/>
            <person name="Spriggs T."/>
            <person name="Hedblom E."/>
            <person name="Cotton M.D."/>
            <person name="Utterback T.R."/>
            <person name="Hanna M.C."/>
            <person name="Nguyen D.T."/>
            <person name="Saudek D.M."/>
            <person name="Brandon R.C."/>
            <person name="Fine L.D."/>
            <person name="Fritchman J.L."/>
            <person name="Fuhrmann J.L."/>
            <person name="Geoghagen N.S.M."/>
            <person name="Gnehm C.L."/>
            <person name="McDonald L.A."/>
            <person name="Small K.V."/>
            <person name="Fraser C.M."/>
            <person name="Smith H.O."/>
            <person name="Venter J.C."/>
        </authorList>
    </citation>
    <scope>NUCLEOTIDE SEQUENCE [LARGE SCALE GENOMIC DNA]</scope>
    <source>
        <strain>ATCC 51907 / DSM 11121 / KW20 / Rd</strain>
    </source>
</reference>
<reference key="2">
    <citation type="journal article" date="1998" name="Protein Expr. Purif.">
        <title>Expression in Escherichia coli of the putative N-acetylneuraminate lyase gene (nanA) from Haemophilus influenzae: overproduction, purification, and crystallization.</title>
        <authorList>
            <person name="Lilley G.G."/>
            <person name="Barbosa J.A."/>
            <person name="Pearce L.A."/>
        </authorList>
    </citation>
    <scope>PROTEIN SEQUENCE OF N-TERMINUS</scope>
    <scope>FUNCTION</scope>
    <scope>CATALYTIC ACTIVITY</scope>
    <scope>CRYSTALLIZATION</scope>
    <source>
        <strain>ATCC 49247</strain>
    </source>
</reference>
<reference evidence="8 9 10 11 12 13" key="3">
    <citation type="journal article" date="2000" name="J. Mol. Biol.">
        <title>Active site modulation in the N-acetylneuraminate lyase sub-family as revealed by the structure of the inhibitor-complexed Haemophilus influenzae enzyme.</title>
        <authorList>
            <person name="Barbosa J.A.R.G."/>
            <person name="Smith B.J."/>
            <person name="DeGori R."/>
            <person name="Ooi H.C."/>
            <person name="Marcuccio S.M."/>
            <person name="Campi E.M."/>
            <person name="Jackson W.R."/>
            <person name="Brossmer R."/>
            <person name="Sommer M."/>
            <person name="Lawrence M.C."/>
        </authorList>
    </citation>
    <scope>X-RAY CRYSTALLOGRAPHY (1.6 ANGSTROMS) OF NATIVE PROTEIN AND COMPLEXES WITH SIALIC ACID ALDITOL; 4-DEOXY-SIALIC ACID AND 4-OXO-SIALIC ACID</scope>
    <scope>SUBUNIT</scope>
    <scope>ACTIVE SITE</scope>
    <source>
        <strain>ATCC 49247</strain>
    </source>
</reference>
<gene>
    <name evidence="1 5" type="primary">nanA</name>
    <name type="ordered locus">HI_0142</name>
</gene>
<comment type="function">
    <text evidence="1 3">Catalyzes the reversible aldol cleavage of N-acetylneuraminic acid (sialic acid; Neu5Ac) to form pyruvate and N-acetylmannosamine (ManNAc) via a Schiff base intermediate.</text>
</comment>
<comment type="catalytic activity">
    <reaction evidence="1 3">
        <text>aceneuramate = aldehydo-N-acetyl-D-mannosamine + pyruvate</text>
        <dbReference type="Rhea" id="RHEA:23296"/>
        <dbReference type="ChEBI" id="CHEBI:15361"/>
        <dbReference type="ChEBI" id="CHEBI:17122"/>
        <dbReference type="ChEBI" id="CHEBI:173083"/>
        <dbReference type="EC" id="4.1.3.3"/>
    </reaction>
</comment>
<comment type="pathway">
    <text evidence="1">Amino-sugar metabolism; N-acetylneuraminate degradation; D-fructose 6-phosphate from N-acetylneuraminate: step 1/5.</text>
</comment>
<comment type="subunit">
    <text evidence="1 2">Homotetramer.</text>
</comment>
<comment type="subcellular location">
    <subcellularLocation>
        <location evidence="1">Cytoplasm</location>
    </subcellularLocation>
</comment>
<comment type="similarity">
    <text evidence="6">Belongs to the DapA family. NanA subfamily.</text>
</comment>
<dbReference type="EC" id="4.1.3.3" evidence="1 3"/>
<dbReference type="EMBL" id="L42023">
    <property type="protein sequence ID" value="AAC21814.1"/>
    <property type="molecule type" value="Genomic_DNA"/>
</dbReference>
<dbReference type="PIR" id="G64050">
    <property type="entry name" value="G64050"/>
</dbReference>
<dbReference type="RefSeq" id="NP_438311.1">
    <property type="nucleotide sequence ID" value="NC_000907.1"/>
</dbReference>
<dbReference type="PDB" id="1F5Z">
    <property type="method" value="X-ray"/>
    <property type="resolution" value="1.88 A"/>
    <property type="chains" value="A/B/C/D=1-293"/>
</dbReference>
<dbReference type="PDB" id="1F6K">
    <property type="method" value="X-ray"/>
    <property type="resolution" value="1.60 A"/>
    <property type="chains" value="A/C=1-293"/>
</dbReference>
<dbReference type="PDB" id="1F6P">
    <property type="method" value="X-ray"/>
    <property type="resolution" value="2.25 A"/>
    <property type="chains" value="A/B/C/D=1-293"/>
</dbReference>
<dbReference type="PDB" id="1F73">
    <property type="method" value="X-ray"/>
    <property type="resolution" value="1.95 A"/>
    <property type="chains" value="A/B/C/D=1-293"/>
</dbReference>
<dbReference type="PDB" id="1F74">
    <property type="method" value="X-ray"/>
    <property type="resolution" value="1.60 A"/>
    <property type="chains" value="A/C=1-293"/>
</dbReference>
<dbReference type="PDB" id="1F7B">
    <property type="method" value="X-ray"/>
    <property type="resolution" value="1.80 A"/>
    <property type="chains" value="A/C=1-293"/>
</dbReference>
<dbReference type="PDBsum" id="1F5Z"/>
<dbReference type="PDBsum" id="1F6K"/>
<dbReference type="PDBsum" id="1F6P"/>
<dbReference type="PDBsum" id="1F73"/>
<dbReference type="PDBsum" id="1F74"/>
<dbReference type="PDBsum" id="1F7B"/>
<dbReference type="SMR" id="P44539"/>
<dbReference type="STRING" id="71421.HI_0142"/>
<dbReference type="EnsemblBacteria" id="AAC21814">
    <property type="protein sequence ID" value="AAC21814"/>
    <property type="gene ID" value="HI_0142"/>
</dbReference>
<dbReference type="KEGG" id="hin:HI_0142"/>
<dbReference type="PATRIC" id="fig|71421.8.peg.144"/>
<dbReference type="eggNOG" id="COG0329">
    <property type="taxonomic scope" value="Bacteria"/>
</dbReference>
<dbReference type="HOGENOM" id="CLU_049343_6_0_6"/>
<dbReference type="OrthoDB" id="199953at2"/>
<dbReference type="PhylomeDB" id="P44539"/>
<dbReference type="BioCyc" id="HINF71421:G1GJ1-154-MONOMER"/>
<dbReference type="UniPathway" id="UPA00629">
    <property type="reaction ID" value="UER00680"/>
</dbReference>
<dbReference type="EvolutionaryTrace" id="P44539"/>
<dbReference type="PRO" id="PR:P44539"/>
<dbReference type="Proteomes" id="UP000000579">
    <property type="component" value="Chromosome"/>
</dbReference>
<dbReference type="GO" id="GO:0005829">
    <property type="term" value="C:cytosol"/>
    <property type="evidence" value="ECO:0000318"/>
    <property type="project" value="GO_Central"/>
</dbReference>
<dbReference type="GO" id="GO:0008747">
    <property type="term" value="F:N-acetylneuraminate lyase activity"/>
    <property type="evidence" value="ECO:0000318"/>
    <property type="project" value="GO_Central"/>
</dbReference>
<dbReference type="GO" id="GO:0005975">
    <property type="term" value="P:carbohydrate metabolic process"/>
    <property type="evidence" value="ECO:0007669"/>
    <property type="project" value="UniProtKB-UniRule"/>
</dbReference>
<dbReference type="GO" id="GO:0019262">
    <property type="term" value="P:N-acetylneuraminate catabolic process"/>
    <property type="evidence" value="ECO:0000318"/>
    <property type="project" value="GO_Central"/>
</dbReference>
<dbReference type="CDD" id="cd00954">
    <property type="entry name" value="NAL"/>
    <property type="match status" value="1"/>
</dbReference>
<dbReference type="FunFam" id="3.20.20.70:FF:000039">
    <property type="entry name" value="N-acetylneuraminate lyase"/>
    <property type="match status" value="1"/>
</dbReference>
<dbReference type="Gene3D" id="3.20.20.70">
    <property type="entry name" value="Aldolase class I"/>
    <property type="match status" value="1"/>
</dbReference>
<dbReference type="HAMAP" id="MF_01237">
    <property type="entry name" value="N_acetylneuram_lyase"/>
    <property type="match status" value="1"/>
</dbReference>
<dbReference type="InterPro" id="IPR013785">
    <property type="entry name" value="Aldolase_TIM"/>
</dbReference>
<dbReference type="InterPro" id="IPR002220">
    <property type="entry name" value="DapA-like"/>
</dbReference>
<dbReference type="InterPro" id="IPR005264">
    <property type="entry name" value="NanA"/>
</dbReference>
<dbReference type="InterPro" id="IPR020625">
    <property type="entry name" value="Schiff_base-form_aldolases_AS"/>
</dbReference>
<dbReference type="InterPro" id="IPR020624">
    <property type="entry name" value="Schiff_base-form_aldolases_CS"/>
</dbReference>
<dbReference type="NCBIfam" id="TIGR00683">
    <property type="entry name" value="nanA"/>
    <property type="match status" value="1"/>
</dbReference>
<dbReference type="NCBIfam" id="NF003164">
    <property type="entry name" value="PRK04147.1"/>
    <property type="match status" value="1"/>
</dbReference>
<dbReference type="PANTHER" id="PTHR42849">
    <property type="entry name" value="N-ACETYLNEURAMINATE LYASE"/>
    <property type="match status" value="1"/>
</dbReference>
<dbReference type="PANTHER" id="PTHR42849:SF1">
    <property type="entry name" value="N-ACETYLNEURAMINATE LYASE"/>
    <property type="match status" value="1"/>
</dbReference>
<dbReference type="Pfam" id="PF00701">
    <property type="entry name" value="DHDPS"/>
    <property type="match status" value="1"/>
</dbReference>
<dbReference type="PIRSF" id="PIRSF001365">
    <property type="entry name" value="DHDPS"/>
    <property type="match status" value="1"/>
</dbReference>
<dbReference type="PRINTS" id="PR00146">
    <property type="entry name" value="DHPICSNTHASE"/>
</dbReference>
<dbReference type="SMART" id="SM01130">
    <property type="entry name" value="DHDPS"/>
    <property type="match status" value="1"/>
</dbReference>
<dbReference type="SUPFAM" id="SSF51569">
    <property type="entry name" value="Aldolase"/>
    <property type="match status" value="1"/>
</dbReference>
<dbReference type="PROSITE" id="PS00665">
    <property type="entry name" value="DHDPS_1"/>
    <property type="match status" value="1"/>
</dbReference>
<dbReference type="PROSITE" id="PS00666">
    <property type="entry name" value="DHDPS_2"/>
    <property type="match status" value="1"/>
</dbReference>
<protein>
    <recommendedName>
        <fullName evidence="1 4 5">N-acetylneuraminate lyase</fullName>
        <shortName evidence="1 4">NAL</shortName>
        <shortName evidence="1">Neu5Ac lyase</shortName>
        <ecNumber evidence="1 3">4.1.3.3</ecNumber>
    </recommendedName>
    <alternativeName>
        <fullName evidence="1">N-acetylneuraminate pyruvate-lyase</fullName>
    </alternativeName>
    <alternativeName>
        <fullName evidence="1 5">N-acetylneuraminic acid aldolase</fullName>
    </alternativeName>
    <alternativeName>
        <fullName evidence="1">Sialate lyase</fullName>
    </alternativeName>
    <alternativeName>
        <fullName evidence="1 5">Sialic acid aldolase</fullName>
    </alternativeName>
    <alternativeName>
        <fullName evidence="1">Sialic acid lyase</fullName>
    </alternativeName>
</protein>
<keyword id="KW-0002">3D-structure</keyword>
<keyword id="KW-0119">Carbohydrate metabolism</keyword>
<keyword id="KW-0963">Cytoplasm</keyword>
<keyword id="KW-0903">Direct protein sequencing</keyword>
<keyword id="KW-0456">Lyase</keyword>
<keyword id="KW-1185">Reference proteome</keyword>
<keyword id="KW-0704">Schiff base</keyword>
<name>NANA_HAEIN</name>
<organism>
    <name type="scientific">Haemophilus influenzae (strain ATCC 51907 / DSM 11121 / KW20 / Rd)</name>
    <dbReference type="NCBI Taxonomy" id="71421"/>
    <lineage>
        <taxon>Bacteria</taxon>
        <taxon>Pseudomonadati</taxon>
        <taxon>Pseudomonadota</taxon>
        <taxon>Gammaproteobacteria</taxon>
        <taxon>Pasteurellales</taxon>
        <taxon>Pasteurellaceae</taxon>
        <taxon>Haemophilus</taxon>
    </lineage>
</organism>